<proteinExistence type="inferred from homology"/>
<feature type="chain" id="PRO_1000165980" description="Large ribosomal subunit protein uL4">
    <location>
        <begin position="1"/>
        <end position="206"/>
    </location>
</feature>
<feature type="region of interest" description="Disordered" evidence="2">
    <location>
        <begin position="48"/>
        <end position="97"/>
    </location>
</feature>
<feature type="compositionally biased region" description="Basic residues" evidence="2">
    <location>
        <begin position="63"/>
        <end position="72"/>
    </location>
</feature>
<organism>
    <name type="scientific">Anaeromyxobacter dehalogenans (strain 2CP-1 / ATCC BAA-258)</name>
    <dbReference type="NCBI Taxonomy" id="455488"/>
    <lineage>
        <taxon>Bacteria</taxon>
        <taxon>Pseudomonadati</taxon>
        <taxon>Myxococcota</taxon>
        <taxon>Myxococcia</taxon>
        <taxon>Myxococcales</taxon>
        <taxon>Cystobacterineae</taxon>
        <taxon>Anaeromyxobacteraceae</taxon>
        <taxon>Anaeromyxobacter</taxon>
    </lineage>
</organism>
<sequence length="206" mass="22130">MAKFDVYDLSKKKVGELDLADAVFAGEVNEHLFYEVVKAKLASDRSGTHAVKNRSLVSGGGKKPWKQKHTGRARQGSTRASQWVGGGKAMGPKPRDYSYDVPKKVRKAALRSALALRSKDQKLVIVQEWKPGAPKTAAAAKVLSALGAKKALVVDDAANLALAKSVRNLHGSDFLAVEGLNVYDILRHDALVLTADTAKKLEASLS</sequence>
<gene>
    <name evidence="1" type="primary">rplD</name>
    <name type="ordered locus">A2cp1_2019</name>
</gene>
<protein>
    <recommendedName>
        <fullName evidence="1">Large ribosomal subunit protein uL4</fullName>
    </recommendedName>
    <alternativeName>
        <fullName evidence="3">50S ribosomal protein L4</fullName>
    </alternativeName>
</protein>
<comment type="function">
    <text evidence="1">One of the primary rRNA binding proteins, this protein initially binds near the 5'-end of the 23S rRNA. It is important during the early stages of 50S assembly. It makes multiple contacts with different domains of the 23S rRNA in the assembled 50S subunit and ribosome.</text>
</comment>
<comment type="function">
    <text evidence="1">Forms part of the polypeptide exit tunnel.</text>
</comment>
<comment type="subunit">
    <text evidence="1">Part of the 50S ribosomal subunit.</text>
</comment>
<comment type="similarity">
    <text evidence="1">Belongs to the universal ribosomal protein uL4 family.</text>
</comment>
<name>RL4_ANAD2</name>
<accession>B8J861</accession>
<evidence type="ECO:0000255" key="1">
    <source>
        <dbReference type="HAMAP-Rule" id="MF_01328"/>
    </source>
</evidence>
<evidence type="ECO:0000256" key="2">
    <source>
        <dbReference type="SAM" id="MobiDB-lite"/>
    </source>
</evidence>
<evidence type="ECO:0000305" key="3"/>
<dbReference type="EMBL" id="CP001359">
    <property type="protein sequence ID" value="ACL65360.1"/>
    <property type="molecule type" value="Genomic_DNA"/>
</dbReference>
<dbReference type="RefSeq" id="WP_012633248.1">
    <property type="nucleotide sequence ID" value="NC_011891.1"/>
</dbReference>
<dbReference type="SMR" id="B8J861"/>
<dbReference type="KEGG" id="acp:A2cp1_2019"/>
<dbReference type="HOGENOM" id="CLU_041575_5_2_7"/>
<dbReference type="Proteomes" id="UP000007089">
    <property type="component" value="Chromosome"/>
</dbReference>
<dbReference type="GO" id="GO:1990904">
    <property type="term" value="C:ribonucleoprotein complex"/>
    <property type="evidence" value="ECO:0007669"/>
    <property type="project" value="UniProtKB-KW"/>
</dbReference>
<dbReference type="GO" id="GO:0005840">
    <property type="term" value="C:ribosome"/>
    <property type="evidence" value="ECO:0007669"/>
    <property type="project" value="UniProtKB-KW"/>
</dbReference>
<dbReference type="GO" id="GO:0019843">
    <property type="term" value="F:rRNA binding"/>
    <property type="evidence" value="ECO:0007669"/>
    <property type="project" value="UniProtKB-UniRule"/>
</dbReference>
<dbReference type="GO" id="GO:0003735">
    <property type="term" value="F:structural constituent of ribosome"/>
    <property type="evidence" value="ECO:0007669"/>
    <property type="project" value="InterPro"/>
</dbReference>
<dbReference type="GO" id="GO:0006412">
    <property type="term" value="P:translation"/>
    <property type="evidence" value="ECO:0007669"/>
    <property type="project" value="UniProtKB-UniRule"/>
</dbReference>
<dbReference type="Gene3D" id="3.40.1370.10">
    <property type="match status" value="1"/>
</dbReference>
<dbReference type="HAMAP" id="MF_01328_B">
    <property type="entry name" value="Ribosomal_uL4_B"/>
    <property type="match status" value="1"/>
</dbReference>
<dbReference type="InterPro" id="IPR002136">
    <property type="entry name" value="Ribosomal_uL4"/>
</dbReference>
<dbReference type="InterPro" id="IPR013005">
    <property type="entry name" value="Ribosomal_uL4-like"/>
</dbReference>
<dbReference type="InterPro" id="IPR023574">
    <property type="entry name" value="Ribosomal_uL4_dom_sf"/>
</dbReference>
<dbReference type="NCBIfam" id="TIGR03953">
    <property type="entry name" value="rplD_bact"/>
    <property type="match status" value="1"/>
</dbReference>
<dbReference type="PANTHER" id="PTHR10746">
    <property type="entry name" value="50S RIBOSOMAL PROTEIN L4"/>
    <property type="match status" value="1"/>
</dbReference>
<dbReference type="PANTHER" id="PTHR10746:SF6">
    <property type="entry name" value="LARGE RIBOSOMAL SUBUNIT PROTEIN UL4M"/>
    <property type="match status" value="1"/>
</dbReference>
<dbReference type="Pfam" id="PF00573">
    <property type="entry name" value="Ribosomal_L4"/>
    <property type="match status" value="1"/>
</dbReference>
<dbReference type="SUPFAM" id="SSF52166">
    <property type="entry name" value="Ribosomal protein L4"/>
    <property type="match status" value="1"/>
</dbReference>
<reference key="1">
    <citation type="submission" date="2009-01" db="EMBL/GenBank/DDBJ databases">
        <title>Complete sequence of Anaeromyxobacter dehalogenans 2CP-1.</title>
        <authorList>
            <person name="Lucas S."/>
            <person name="Copeland A."/>
            <person name="Lapidus A."/>
            <person name="Glavina del Rio T."/>
            <person name="Dalin E."/>
            <person name="Tice H."/>
            <person name="Bruce D."/>
            <person name="Goodwin L."/>
            <person name="Pitluck S."/>
            <person name="Saunders E."/>
            <person name="Brettin T."/>
            <person name="Detter J.C."/>
            <person name="Han C."/>
            <person name="Larimer F."/>
            <person name="Land M."/>
            <person name="Hauser L."/>
            <person name="Kyrpides N."/>
            <person name="Ovchinnikova G."/>
            <person name="Beliaev A.S."/>
            <person name="Richardson P."/>
        </authorList>
    </citation>
    <scope>NUCLEOTIDE SEQUENCE [LARGE SCALE GENOMIC DNA]</scope>
    <source>
        <strain>2CP-1 / ATCC BAA-258</strain>
    </source>
</reference>
<keyword id="KW-0687">Ribonucleoprotein</keyword>
<keyword id="KW-0689">Ribosomal protein</keyword>
<keyword id="KW-0694">RNA-binding</keyword>
<keyword id="KW-0699">rRNA-binding</keyword>